<comment type="function">
    <text evidence="1">Catalyzes the conversion of 1-hydroxy-2-methyl-2-(E)-butenyl 4-diphosphate (HMBPP) into a mixture of isopentenyl diphosphate (IPP) and dimethylallyl diphosphate (DMAPP). Acts in the terminal step of the DOXP/MEP pathway for isoprenoid precursor biosynthesis.</text>
</comment>
<comment type="catalytic activity">
    <reaction evidence="1">
        <text>isopentenyl diphosphate + 2 oxidized [2Fe-2S]-[ferredoxin] + H2O = (2E)-4-hydroxy-3-methylbut-2-enyl diphosphate + 2 reduced [2Fe-2S]-[ferredoxin] + 2 H(+)</text>
        <dbReference type="Rhea" id="RHEA:24488"/>
        <dbReference type="Rhea" id="RHEA-COMP:10000"/>
        <dbReference type="Rhea" id="RHEA-COMP:10001"/>
        <dbReference type="ChEBI" id="CHEBI:15377"/>
        <dbReference type="ChEBI" id="CHEBI:15378"/>
        <dbReference type="ChEBI" id="CHEBI:33737"/>
        <dbReference type="ChEBI" id="CHEBI:33738"/>
        <dbReference type="ChEBI" id="CHEBI:128753"/>
        <dbReference type="ChEBI" id="CHEBI:128769"/>
        <dbReference type="EC" id="1.17.7.4"/>
    </reaction>
</comment>
<comment type="catalytic activity">
    <reaction evidence="1">
        <text>dimethylallyl diphosphate + 2 oxidized [2Fe-2S]-[ferredoxin] + H2O = (2E)-4-hydroxy-3-methylbut-2-enyl diphosphate + 2 reduced [2Fe-2S]-[ferredoxin] + 2 H(+)</text>
        <dbReference type="Rhea" id="RHEA:24825"/>
        <dbReference type="Rhea" id="RHEA-COMP:10000"/>
        <dbReference type="Rhea" id="RHEA-COMP:10001"/>
        <dbReference type="ChEBI" id="CHEBI:15377"/>
        <dbReference type="ChEBI" id="CHEBI:15378"/>
        <dbReference type="ChEBI" id="CHEBI:33737"/>
        <dbReference type="ChEBI" id="CHEBI:33738"/>
        <dbReference type="ChEBI" id="CHEBI:57623"/>
        <dbReference type="ChEBI" id="CHEBI:128753"/>
        <dbReference type="EC" id="1.17.7.4"/>
    </reaction>
</comment>
<comment type="cofactor">
    <cofactor evidence="1">
        <name>[4Fe-4S] cluster</name>
        <dbReference type="ChEBI" id="CHEBI:49883"/>
    </cofactor>
    <text evidence="1">Binds 1 [4Fe-4S] cluster per subunit.</text>
</comment>
<comment type="pathway">
    <text evidence="1">Isoprenoid biosynthesis; dimethylallyl diphosphate biosynthesis; dimethylallyl diphosphate from (2E)-4-hydroxy-3-methylbutenyl diphosphate: step 1/1.</text>
</comment>
<comment type="pathway">
    <text evidence="1">Isoprenoid biosynthesis; isopentenyl diphosphate biosynthesis via DXP pathway; isopentenyl diphosphate from 1-deoxy-D-xylulose 5-phosphate: step 6/6.</text>
</comment>
<comment type="similarity">
    <text evidence="1">Belongs to the IspH family.</text>
</comment>
<reference key="1">
    <citation type="submission" date="2008-01" db="EMBL/GenBank/DDBJ databases">
        <title>Complete sequence of Thermoanaerobacter pseudethanolicus 39E.</title>
        <authorList>
            <person name="Copeland A."/>
            <person name="Lucas S."/>
            <person name="Lapidus A."/>
            <person name="Barry K."/>
            <person name="Glavina del Rio T."/>
            <person name="Dalin E."/>
            <person name="Tice H."/>
            <person name="Pitluck S."/>
            <person name="Bruce D."/>
            <person name="Goodwin L."/>
            <person name="Saunders E."/>
            <person name="Brettin T."/>
            <person name="Detter J.C."/>
            <person name="Han C."/>
            <person name="Schmutz J."/>
            <person name="Larimer F."/>
            <person name="Land M."/>
            <person name="Hauser L."/>
            <person name="Kyrpides N."/>
            <person name="Lykidis A."/>
            <person name="Hemme C."/>
            <person name="Fields M.W."/>
            <person name="He Z."/>
            <person name="Zhou J."/>
            <person name="Richardson P."/>
        </authorList>
    </citation>
    <scope>NUCLEOTIDE SEQUENCE [LARGE SCALE GENOMIC DNA]</scope>
    <source>
        <strain>ATCC 33223 / DSM 2355 / 39E</strain>
    </source>
</reference>
<organism>
    <name type="scientific">Thermoanaerobacter pseudethanolicus (strain ATCC 33223 / 39E)</name>
    <name type="common">Clostridium thermohydrosulfuricum</name>
    <dbReference type="NCBI Taxonomy" id="340099"/>
    <lineage>
        <taxon>Bacteria</taxon>
        <taxon>Bacillati</taxon>
        <taxon>Bacillota</taxon>
        <taxon>Clostridia</taxon>
        <taxon>Thermoanaerobacterales</taxon>
        <taxon>Thermoanaerobacteraceae</taxon>
        <taxon>Thermoanaerobacter</taxon>
    </lineage>
</organism>
<protein>
    <recommendedName>
        <fullName evidence="1">4-hydroxy-3-methylbut-2-enyl diphosphate reductase</fullName>
        <shortName evidence="1">HMBPP reductase</shortName>
        <ecNumber evidence="1">1.17.7.4</ecNumber>
    </recommendedName>
</protein>
<feature type="chain" id="PRO_1000098982" description="4-hydroxy-3-methylbut-2-enyl diphosphate reductase">
    <location>
        <begin position="1"/>
        <end position="288"/>
    </location>
</feature>
<feature type="active site" description="Proton donor" evidence="1">
    <location>
        <position position="129"/>
    </location>
</feature>
<feature type="binding site" evidence="1">
    <location>
        <position position="12"/>
    </location>
    <ligand>
        <name>[4Fe-4S] cluster</name>
        <dbReference type="ChEBI" id="CHEBI:49883"/>
    </ligand>
</feature>
<feature type="binding site" evidence="1">
    <location>
        <position position="42"/>
    </location>
    <ligand>
        <name>(2E)-4-hydroxy-3-methylbut-2-enyl diphosphate</name>
        <dbReference type="ChEBI" id="CHEBI:128753"/>
    </ligand>
</feature>
<feature type="binding site" evidence="1">
    <location>
        <position position="42"/>
    </location>
    <ligand>
        <name>dimethylallyl diphosphate</name>
        <dbReference type="ChEBI" id="CHEBI:57623"/>
    </ligand>
</feature>
<feature type="binding site" evidence="1">
    <location>
        <position position="42"/>
    </location>
    <ligand>
        <name>isopentenyl diphosphate</name>
        <dbReference type="ChEBI" id="CHEBI:128769"/>
    </ligand>
</feature>
<feature type="binding site" evidence="1">
    <location>
        <position position="77"/>
    </location>
    <ligand>
        <name>(2E)-4-hydroxy-3-methylbut-2-enyl diphosphate</name>
        <dbReference type="ChEBI" id="CHEBI:128753"/>
    </ligand>
</feature>
<feature type="binding site" evidence="1">
    <location>
        <position position="77"/>
    </location>
    <ligand>
        <name>dimethylallyl diphosphate</name>
        <dbReference type="ChEBI" id="CHEBI:57623"/>
    </ligand>
</feature>
<feature type="binding site" evidence="1">
    <location>
        <position position="77"/>
    </location>
    <ligand>
        <name>isopentenyl diphosphate</name>
        <dbReference type="ChEBI" id="CHEBI:128769"/>
    </ligand>
</feature>
<feature type="binding site" evidence="1">
    <location>
        <position position="99"/>
    </location>
    <ligand>
        <name>[4Fe-4S] cluster</name>
        <dbReference type="ChEBI" id="CHEBI:49883"/>
    </ligand>
</feature>
<feature type="binding site" evidence="1">
    <location>
        <position position="127"/>
    </location>
    <ligand>
        <name>(2E)-4-hydroxy-3-methylbut-2-enyl diphosphate</name>
        <dbReference type="ChEBI" id="CHEBI:128753"/>
    </ligand>
</feature>
<feature type="binding site" evidence="1">
    <location>
        <position position="127"/>
    </location>
    <ligand>
        <name>dimethylallyl diphosphate</name>
        <dbReference type="ChEBI" id="CHEBI:57623"/>
    </ligand>
</feature>
<feature type="binding site" evidence="1">
    <location>
        <position position="127"/>
    </location>
    <ligand>
        <name>isopentenyl diphosphate</name>
        <dbReference type="ChEBI" id="CHEBI:128769"/>
    </ligand>
</feature>
<feature type="binding site" evidence="1">
    <location>
        <position position="165"/>
    </location>
    <ligand>
        <name>(2E)-4-hydroxy-3-methylbut-2-enyl diphosphate</name>
        <dbReference type="ChEBI" id="CHEBI:128753"/>
    </ligand>
</feature>
<feature type="binding site" evidence="1">
    <location>
        <position position="193"/>
    </location>
    <ligand>
        <name>[4Fe-4S] cluster</name>
        <dbReference type="ChEBI" id="CHEBI:49883"/>
    </ligand>
</feature>
<feature type="binding site" evidence="1">
    <location>
        <position position="221"/>
    </location>
    <ligand>
        <name>(2E)-4-hydroxy-3-methylbut-2-enyl diphosphate</name>
        <dbReference type="ChEBI" id="CHEBI:128753"/>
    </ligand>
</feature>
<feature type="binding site" evidence="1">
    <location>
        <position position="221"/>
    </location>
    <ligand>
        <name>dimethylallyl diphosphate</name>
        <dbReference type="ChEBI" id="CHEBI:57623"/>
    </ligand>
</feature>
<feature type="binding site" evidence="1">
    <location>
        <position position="221"/>
    </location>
    <ligand>
        <name>isopentenyl diphosphate</name>
        <dbReference type="ChEBI" id="CHEBI:128769"/>
    </ligand>
</feature>
<feature type="binding site" evidence="1">
    <location>
        <position position="222"/>
    </location>
    <ligand>
        <name>(2E)-4-hydroxy-3-methylbut-2-enyl diphosphate</name>
        <dbReference type="ChEBI" id="CHEBI:128753"/>
    </ligand>
</feature>
<feature type="binding site" evidence="1">
    <location>
        <position position="222"/>
    </location>
    <ligand>
        <name>dimethylallyl diphosphate</name>
        <dbReference type="ChEBI" id="CHEBI:57623"/>
    </ligand>
</feature>
<feature type="binding site" evidence="1">
    <location>
        <position position="222"/>
    </location>
    <ligand>
        <name>isopentenyl diphosphate</name>
        <dbReference type="ChEBI" id="CHEBI:128769"/>
    </ligand>
</feature>
<feature type="binding site" evidence="1">
    <location>
        <position position="223"/>
    </location>
    <ligand>
        <name>(2E)-4-hydroxy-3-methylbut-2-enyl diphosphate</name>
        <dbReference type="ChEBI" id="CHEBI:128753"/>
    </ligand>
</feature>
<feature type="binding site" evidence="1">
    <location>
        <position position="223"/>
    </location>
    <ligand>
        <name>dimethylallyl diphosphate</name>
        <dbReference type="ChEBI" id="CHEBI:57623"/>
    </ligand>
</feature>
<feature type="binding site" evidence="1">
    <location>
        <position position="223"/>
    </location>
    <ligand>
        <name>isopentenyl diphosphate</name>
        <dbReference type="ChEBI" id="CHEBI:128769"/>
    </ligand>
</feature>
<feature type="binding site" evidence="1">
    <location>
        <position position="265"/>
    </location>
    <ligand>
        <name>(2E)-4-hydroxy-3-methylbut-2-enyl diphosphate</name>
        <dbReference type="ChEBI" id="CHEBI:128753"/>
    </ligand>
</feature>
<feature type="binding site" evidence="1">
    <location>
        <position position="265"/>
    </location>
    <ligand>
        <name>dimethylallyl diphosphate</name>
        <dbReference type="ChEBI" id="CHEBI:57623"/>
    </ligand>
</feature>
<feature type="binding site" evidence="1">
    <location>
        <position position="265"/>
    </location>
    <ligand>
        <name>isopentenyl diphosphate</name>
        <dbReference type="ChEBI" id="CHEBI:128769"/>
    </ligand>
</feature>
<keyword id="KW-0004">4Fe-4S</keyword>
<keyword id="KW-0408">Iron</keyword>
<keyword id="KW-0411">Iron-sulfur</keyword>
<keyword id="KW-0414">Isoprene biosynthesis</keyword>
<keyword id="KW-0479">Metal-binding</keyword>
<keyword id="KW-0560">Oxidoreductase</keyword>
<keyword id="KW-1185">Reference proteome</keyword>
<dbReference type="EC" id="1.17.7.4" evidence="1"/>
<dbReference type="EMBL" id="CP000924">
    <property type="protein sequence ID" value="ABY94823.1"/>
    <property type="molecule type" value="Genomic_DNA"/>
</dbReference>
<dbReference type="RefSeq" id="WP_009052375.1">
    <property type="nucleotide sequence ID" value="NC_010321.1"/>
</dbReference>
<dbReference type="SMR" id="B0K9L0"/>
<dbReference type="STRING" id="340099.Teth39_1169"/>
<dbReference type="KEGG" id="tpd:Teth39_1169"/>
<dbReference type="eggNOG" id="COG0761">
    <property type="taxonomic scope" value="Bacteria"/>
</dbReference>
<dbReference type="HOGENOM" id="CLU_027486_0_1_9"/>
<dbReference type="UniPathway" id="UPA00056">
    <property type="reaction ID" value="UER00097"/>
</dbReference>
<dbReference type="UniPathway" id="UPA00059">
    <property type="reaction ID" value="UER00105"/>
</dbReference>
<dbReference type="Proteomes" id="UP000002156">
    <property type="component" value="Chromosome"/>
</dbReference>
<dbReference type="GO" id="GO:0051539">
    <property type="term" value="F:4 iron, 4 sulfur cluster binding"/>
    <property type="evidence" value="ECO:0007669"/>
    <property type="project" value="UniProtKB-UniRule"/>
</dbReference>
<dbReference type="GO" id="GO:0051745">
    <property type="term" value="F:4-hydroxy-3-methylbut-2-enyl diphosphate reductase activity"/>
    <property type="evidence" value="ECO:0007669"/>
    <property type="project" value="UniProtKB-UniRule"/>
</dbReference>
<dbReference type="GO" id="GO:0046872">
    <property type="term" value="F:metal ion binding"/>
    <property type="evidence" value="ECO:0007669"/>
    <property type="project" value="UniProtKB-KW"/>
</dbReference>
<dbReference type="GO" id="GO:0050992">
    <property type="term" value="P:dimethylallyl diphosphate biosynthetic process"/>
    <property type="evidence" value="ECO:0007669"/>
    <property type="project" value="UniProtKB-UniRule"/>
</dbReference>
<dbReference type="GO" id="GO:0019288">
    <property type="term" value="P:isopentenyl diphosphate biosynthetic process, methylerythritol 4-phosphate pathway"/>
    <property type="evidence" value="ECO:0007669"/>
    <property type="project" value="UniProtKB-UniRule"/>
</dbReference>
<dbReference type="GO" id="GO:0016114">
    <property type="term" value="P:terpenoid biosynthetic process"/>
    <property type="evidence" value="ECO:0007669"/>
    <property type="project" value="UniProtKB-UniRule"/>
</dbReference>
<dbReference type="CDD" id="cd13944">
    <property type="entry name" value="lytB_ispH"/>
    <property type="match status" value="1"/>
</dbReference>
<dbReference type="Gene3D" id="3.40.50.11270">
    <property type="match status" value="1"/>
</dbReference>
<dbReference type="Gene3D" id="3.40.1010.20">
    <property type="entry name" value="4-hydroxy-3-methylbut-2-enyl diphosphate reductase, catalytic domain"/>
    <property type="match status" value="2"/>
</dbReference>
<dbReference type="HAMAP" id="MF_00191">
    <property type="entry name" value="IspH"/>
    <property type="match status" value="1"/>
</dbReference>
<dbReference type="InterPro" id="IPR003451">
    <property type="entry name" value="LytB/IspH"/>
</dbReference>
<dbReference type="NCBIfam" id="TIGR00216">
    <property type="entry name" value="ispH_lytB"/>
    <property type="match status" value="1"/>
</dbReference>
<dbReference type="NCBIfam" id="NF002187">
    <property type="entry name" value="PRK01045.1-1"/>
    <property type="match status" value="1"/>
</dbReference>
<dbReference type="NCBIfam" id="NF009024">
    <property type="entry name" value="PRK12360.1"/>
    <property type="match status" value="1"/>
</dbReference>
<dbReference type="PANTHER" id="PTHR30426">
    <property type="entry name" value="4-HYDROXY-3-METHYLBUT-2-ENYL DIPHOSPHATE REDUCTASE"/>
    <property type="match status" value="1"/>
</dbReference>
<dbReference type="PANTHER" id="PTHR30426:SF0">
    <property type="entry name" value="4-HYDROXY-3-METHYLBUT-2-ENYL DIPHOSPHATE REDUCTASE"/>
    <property type="match status" value="1"/>
</dbReference>
<dbReference type="Pfam" id="PF02401">
    <property type="entry name" value="LYTB"/>
    <property type="match status" value="1"/>
</dbReference>
<evidence type="ECO:0000255" key="1">
    <source>
        <dbReference type="HAMAP-Rule" id="MF_00191"/>
    </source>
</evidence>
<sequence length="288" mass="32545">MKILIAEYAGFCFGVKRAIETAYQEIEKGDGKKIYTLGEIIHNPQVISDLSKKGVNVIEEEELDKLTEGDKLIIRSHGVSKKLYDFLAKKGVEVIDVTCPFVKKVQNIVYEYYHKGYSIIIVGDRNHPEVIGVNGWCDDTAYVVNSIEEAYELPQLEKACAVAQTTLIEKHWKDILEVIKLKVKDLIFFNTICDATQKRQDAADELSKKVDVMFVIGGKHSSNTQKLKKICEKNCKNTFHIEDAEELTLEMVKDHEIIGVTAGASTPDYVIEDVIKKIRFLKGEDGDE</sequence>
<gene>
    <name evidence="1" type="primary">ispH</name>
    <name type="ordered locus">Teth39_1169</name>
</gene>
<proteinExistence type="inferred from homology"/>
<name>ISPH_THEP3</name>
<accession>B0K9L0</accession>